<feature type="peptide" id="PRO_0000043591" description="Formaecin-1">
    <location>
        <begin position="1"/>
        <end position="16"/>
    </location>
</feature>
<feature type="glycosylation site" description="O-linked (GalNAc...) threonine" evidence="1">
    <location>
        <position position="11"/>
    </location>
</feature>
<sequence length="16" mass="1794">GRPNPVNNKPTPHPRL</sequence>
<reference key="1">
    <citation type="journal article" date="1998" name="J. Biol. Chem.">
        <title>Isolation from an ant Myrmecia gulosa of two inducible O-glycosylated proline-rich antibacterial peptides.</title>
        <authorList>
            <person name="Mackintosh J.A."/>
            <person name="Veal D.A."/>
            <person name="Beattie A.J."/>
            <person name="Gooley A.A."/>
        </authorList>
    </citation>
    <scope>PROTEIN SEQUENCE</scope>
    <scope>GLYCOSYLATION AT THR-11</scope>
    <source>
        <tissue>Hemolymph</tissue>
    </source>
</reference>
<accession>P81438</accession>
<organism>
    <name type="scientific">Myrmecia gulosa</name>
    <name type="common">Red bulldog ant</name>
    <dbReference type="NCBI Taxonomy" id="36170"/>
    <lineage>
        <taxon>Eukaryota</taxon>
        <taxon>Metazoa</taxon>
        <taxon>Ecdysozoa</taxon>
        <taxon>Arthropoda</taxon>
        <taxon>Hexapoda</taxon>
        <taxon>Insecta</taxon>
        <taxon>Pterygota</taxon>
        <taxon>Neoptera</taxon>
        <taxon>Endopterygota</taxon>
        <taxon>Hymenoptera</taxon>
        <taxon>Apocrita</taxon>
        <taxon>Aculeata</taxon>
        <taxon>Formicoidea</taxon>
        <taxon>Formicidae</taxon>
        <taxon>Myrmeciinae</taxon>
        <taxon>Myrmeciini</taxon>
        <taxon>Myrmecia</taxon>
    </lineage>
</organism>
<name>FORM1_MYRGU</name>
<keyword id="KW-0044">Antibiotic</keyword>
<keyword id="KW-0929">Antimicrobial</keyword>
<keyword id="KW-0903">Direct protein sequencing</keyword>
<keyword id="KW-0325">Glycoprotein</keyword>
<keyword id="KW-0391">Immunity</keyword>
<keyword id="KW-0399">Innate immunity</keyword>
<keyword id="KW-0964">Secreted</keyword>
<proteinExistence type="evidence at protein level"/>
<evidence type="ECO:0000269" key="1">
    <source>
    </source>
</evidence>
<comment type="function">
    <text>Antibacterial peptide. Has activity against E.coli but none against other Gram-negative bacteria and Gram-positive bacteria.</text>
</comment>
<comment type="subcellular location">
    <subcellularLocation>
        <location>Secreted</location>
    </subcellularLocation>
</comment>
<comment type="induction">
    <text>By bacterial infection.</text>
</comment>
<comment type="PTM">
    <text evidence="1">O-linked glycan consists of a Gal-GalNAc disaccharide, O-glycosylation is essential for full biological activity.</text>
</comment>
<dbReference type="iPTMnet" id="P81438"/>
<dbReference type="GO" id="GO:0005576">
    <property type="term" value="C:extracellular region"/>
    <property type="evidence" value="ECO:0007669"/>
    <property type="project" value="UniProtKB-SubCell"/>
</dbReference>
<dbReference type="GO" id="GO:0042742">
    <property type="term" value="P:defense response to bacterium"/>
    <property type="evidence" value="ECO:0007669"/>
    <property type="project" value="UniProtKB-KW"/>
</dbReference>
<dbReference type="GO" id="GO:0042381">
    <property type="term" value="P:hemolymph coagulation"/>
    <property type="evidence" value="ECO:0007669"/>
    <property type="project" value="InterPro"/>
</dbReference>
<dbReference type="InterPro" id="IPR012514">
    <property type="entry name" value="Formaecin"/>
</dbReference>
<dbReference type="Pfam" id="PF08106">
    <property type="entry name" value="Antimicrobial11"/>
    <property type="match status" value="1"/>
</dbReference>
<protein>
    <recommendedName>
        <fullName>Formaecin-1</fullName>
    </recommendedName>
</protein>